<organism>
    <name type="scientific">Rattus norvegicus</name>
    <name type="common">Rat</name>
    <dbReference type="NCBI Taxonomy" id="10116"/>
    <lineage>
        <taxon>Eukaryota</taxon>
        <taxon>Metazoa</taxon>
        <taxon>Chordata</taxon>
        <taxon>Craniata</taxon>
        <taxon>Vertebrata</taxon>
        <taxon>Euteleostomi</taxon>
        <taxon>Mammalia</taxon>
        <taxon>Eutheria</taxon>
        <taxon>Euarchontoglires</taxon>
        <taxon>Glires</taxon>
        <taxon>Rodentia</taxon>
        <taxon>Myomorpha</taxon>
        <taxon>Muroidea</taxon>
        <taxon>Muridae</taxon>
        <taxon>Murinae</taxon>
        <taxon>Rattus</taxon>
    </lineage>
</organism>
<name>DLG3_RAT</name>
<keyword id="KW-0002">3D-structure</keyword>
<keyword id="KW-0025">Alternative splicing</keyword>
<keyword id="KW-0597">Phosphoprotein</keyword>
<keyword id="KW-1185">Reference proteome</keyword>
<keyword id="KW-0677">Repeat</keyword>
<keyword id="KW-0728">SH3 domain</keyword>
<protein>
    <recommendedName>
        <fullName>Disks large homolog 3</fullName>
    </recommendedName>
    <alternativeName>
        <fullName>PSD-95/SAP90-related protein 1</fullName>
    </alternativeName>
    <alternativeName>
        <fullName>Synapse-associated protein 102</fullName>
        <shortName>SAP-102</shortName>
        <shortName>SAP102</shortName>
    </alternativeName>
</protein>
<gene>
    <name type="primary">Dlg3</name>
    <name type="synonym">Dlgh3</name>
</gene>
<sequence length="849" mass="93539">MHKHQHCCKCPECYEVTRLAALRRLEPPGYGDWQVPDPYGPSGGNGASSGYGGYSSQTLPSQAGATPTPRTKAKLIPTGRDVGPVPPKPVPGKNTPKLNGSGPSWWPECTCTNRDWYEQASPAPLLVNPEALEPSLSVNGSDGMFKYEEIVLERGNSGLGFSIAGGIDNPHVPDDPGIFITKIIPGGAAAMDGRLGVNDCVLRVNEVDVSEVVHSRAVEALKEAGPVVRLVVRRRQPPPETIMEVNLLKGPKGLGFSIAGGIGNQHIPGDNSIYITKIIEGGAAQKDGRLQIGDRLLAVNNTNLQDVRHEEAVASLKNTSDMVYLKVAKPGSLHLNDMYAPPDYASTFTALADNHISHNSSLGYLGAVESKVTYPAPPQVPPTRYSPIPRHMLAEEDFTREPRKIILHKGSTGLGFNIVGGEDGEGIFVSFILAGGPADLSGELRRGDRILSVNGVNLRNATHEQAAAALKRAGQSVTIVAQYRPEEYSRFESKIHDLREQMMNSSMSSGSGSLRTSEKRSLYVRALFDYDRTRDSCLPSQGLSFSYGDILHVINASDDEWWQARLVTPHGESEQIGVIPSKKRVEKKERARLKTVKFHARTGMIESNRDFPGLSDDYYGAKNLKGVTSNTSDSESSSKGQEDAILSYEPVTRQEIHYARPVIILGPMKDRVNDDLISEFPHKFGSCVPHTTRPRRDNEVDGQDYHFVVSREQMEKDIQDNKFIEAGQFNDNLYGTSIQSVRAVAERGKHCILDVSGNAIKRLQQAQLYPIAIFIKPKSIEALMEMNRRQTYEQANKIFDKAMKLEQEFGEYFTAIVQGDSLEEIYNKIKQIIEDQSGHYIWVPSPEKL</sequence>
<accession>Q62936</accession>
<accession>P70547</accession>
<dbReference type="EMBL" id="U50147">
    <property type="protein sequence ID" value="AAA93031.1"/>
    <property type="molecule type" value="mRNA"/>
</dbReference>
<dbReference type="EMBL" id="U53367">
    <property type="protein sequence ID" value="AAB48561.1"/>
    <property type="molecule type" value="Genomic_DNA"/>
</dbReference>
<dbReference type="RefSeq" id="NP_113827.1">
    <molecule id="Q62936-1"/>
    <property type="nucleotide sequence ID" value="NM_031639.2"/>
</dbReference>
<dbReference type="RefSeq" id="XP_006257144.1">
    <molecule id="Q62936-2"/>
    <property type="nucleotide sequence ID" value="XM_006257082.5"/>
</dbReference>
<dbReference type="PDB" id="3JXT">
    <property type="method" value="X-ray"/>
    <property type="resolution" value="1.50 A"/>
    <property type="chains" value="A/B=393-493"/>
</dbReference>
<dbReference type="PDBsum" id="3JXT"/>
<dbReference type="SMR" id="Q62936"/>
<dbReference type="BioGRID" id="248683">
    <property type="interactions" value="11"/>
</dbReference>
<dbReference type="CORUM" id="Q62936"/>
<dbReference type="ELM" id="Q62936"/>
<dbReference type="FunCoup" id="Q62936">
    <property type="interactions" value="2812"/>
</dbReference>
<dbReference type="IntAct" id="Q62936">
    <property type="interactions" value="29"/>
</dbReference>
<dbReference type="MINT" id="Q62936"/>
<dbReference type="STRING" id="10116.ENSRNOP00000003741"/>
<dbReference type="GlyGen" id="Q62936">
    <property type="glycosylation" value="1 site"/>
</dbReference>
<dbReference type="iPTMnet" id="Q62936"/>
<dbReference type="PhosphoSitePlus" id="Q62936"/>
<dbReference type="PaxDb" id="10116-ENSRNOP00000003741"/>
<dbReference type="ABCD" id="Q62936">
    <property type="antibodies" value="2 sequenced antibodies"/>
</dbReference>
<dbReference type="Ensembl" id="ENSRNOT00000003741.7">
    <molecule id="Q62936-1"/>
    <property type="protein sequence ID" value="ENSRNOP00000003741.2"/>
    <property type="gene ID" value="ENSRNOG00000002767.9"/>
</dbReference>
<dbReference type="Ensembl" id="ENSRNOT00000045082.7">
    <molecule id="Q62936-2"/>
    <property type="protein sequence ID" value="ENSRNOP00000047310.3"/>
    <property type="gene ID" value="ENSRNOG00000002767.9"/>
</dbReference>
<dbReference type="GeneID" id="58948"/>
<dbReference type="KEGG" id="rno:58948"/>
<dbReference type="UCSC" id="RGD:68423">
    <molecule id="Q62936-1"/>
    <property type="organism name" value="rat"/>
</dbReference>
<dbReference type="AGR" id="RGD:68423"/>
<dbReference type="CTD" id="1741"/>
<dbReference type="RGD" id="68423">
    <property type="gene designation" value="Dlg3"/>
</dbReference>
<dbReference type="eggNOG" id="KOG0708">
    <property type="taxonomic scope" value="Eukaryota"/>
</dbReference>
<dbReference type="GeneTree" id="ENSGT00940000159565"/>
<dbReference type="InParanoid" id="Q62936"/>
<dbReference type="OrthoDB" id="78824at2759"/>
<dbReference type="PhylomeDB" id="Q62936"/>
<dbReference type="TreeFam" id="TF323171"/>
<dbReference type="Reactome" id="R-RNO-438066">
    <property type="pathway name" value="Unblocking of NMDA receptors, glutamate binding and activation"/>
</dbReference>
<dbReference type="Reactome" id="R-RNO-451308">
    <property type="pathway name" value="Activation of Ca-permeable Kainate Receptor"/>
</dbReference>
<dbReference type="Reactome" id="R-RNO-5673001">
    <property type="pathway name" value="RAF/MAP kinase cascade"/>
</dbReference>
<dbReference type="Reactome" id="R-RNO-6794361">
    <property type="pathway name" value="Neurexins and neuroligins"/>
</dbReference>
<dbReference type="Reactome" id="R-RNO-8849932">
    <property type="pathway name" value="Synaptic adhesion-like molecules"/>
</dbReference>
<dbReference type="EvolutionaryTrace" id="Q62936"/>
<dbReference type="PRO" id="PR:Q62936"/>
<dbReference type="Proteomes" id="UP000002494">
    <property type="component" value="Chromosome X"/>
</dbReference>
<dbReference type="Bgee" id="ENSRNOG00000002767">
    <property type="expression patterns" value="Expressed in frontal cortex and 20 other cell types or tissues"/>
</dbReference>
<dbReference type="ExpressionAtlas" id="Q62936">
    <property type="expression patterns" value="baseline and differential"/>
</dbReference>
<dbReference type="GO" id="GO:0032281">
    <property type="term" value="C:AMPA glutamate receptor complex"/>
    <property type="evidence" value="ECO:0000266"/>
    <property type="project" value="RGD"/>
</dbReference>
<dbReference type="GO" id="GO:0016323">
    <property type="term" value="C:basolateral plasma membrane"/>
    <property type="evidence" value="ECO:0000318"/>
    <property type="project" value="GO_Central"/>
</dbReference>
<dbReference type="GO" id="GO:0005923">
    <property type="term" value="C:bicellular tight junction"/>
    <property type="evidence" value="ECO:0000266"/>
    <property type="project" value="RGD"/>
</dbReference>
<dbReference type="GO" id="GO:0005911">
    <property type="term" value="C:cell-cell junction"/>
    <property type="evidence" value="ECO:0000266"/>
    <property type="project" value="RGD"/>
</dbReference>
<dbReference type="GO" id="GO:0005737">
    <property type="term" value="C:cytoplasm"/>
    <property type="evidence" value="ECO:0000266"/>
    <property type="project" value="RGD"/>
</dbReference>
<dbReference type="GO" id="GO:0043198">
    <property type="term" value="C:dendritic shaft"/>
    <property type="evidence" value="ECO:0000314"/>
    <property type="project" value="UniProtKB"/>
</dbReference>
<dbReference type="GO" id="GO:0098978">
    <property type="term" value="C:glutamatergic synapse"/>
    <property type="evidence" value="ECO:0000314"/>
    <property type="project" value="SynGO"/>
</dbReference>
<dbReference type="GO" id="GO:0030426">
    <property type="term" value="C:growth cone"/>
    <property type="evidence" value="ECO:0000314"/>
    <property type="project" value="UniProtKB"/>
</dbReference>
<dbReference type="GO" id="GO:0031594">
    <property type="term" value="C:neuromuscular junction"/>
    <property type="evidence" value="ECO:0000318"/>
    <property type="project" value="GO_Central"/>
</dbReference>
<dbReference type="GO" id="GO:0043005">
    <property type="term" value="C:neuron projection"/>
    <property type="evidence" value="ECO:0000318"/>
    <property type="project" value="GO_Central"/>
</dbReference>
<dbReference type="GO" id="GO:0043025">
    <property type="term" value="C:neuronal cell body"/>
    <property type="evidence" value="ECO:0000314"/>
    <property type="project" value="UniProtKB"/>
</dbReference>
<dbReference type="GO" id="GO:0005886">
    <property type="term" value="C:plasma membrane"/>
    <property type="evidence" value="ECO:0000266"/>
    <property type="project" value="RGD"/>
</dbReference>
<dbReference type="GO" id="GO:0014069">
    <property type="term" value="C:postsynaptic density"/>
    <property type="evidence" value="ECO:0000314"/>
    <property type="project" value="UniProtKB"/>
</dbReference>
<dbReference type="GO" id="GO:0098839">
    <property type="term" value="C:postsynaptic density membrane"/>
    <property type="evidence" value="ECO:0000318"/>
    <property type="project" value="GO_Central"/>
</dbReference>
<dbReference type="GO" id="GO:0099092">
    <property type="term" value="C:postsynaptic density, intracellular component"/>
    <property type="evidence" value="ECO:0000314"/>
    <property type="project" value="SynGO"/>
</dbReference>
<dbReference type="GO" id="GO:0045202">
    <property type="term" value="C:synapse"/>
    <property type="evidence" value="ECO:0000314"/>
    <property type="project" value="UniProtKB"/>
</dbReference>
<dbReference type="GO" id="GO:0035255">
    <property type="term" value="F:ionotropic glutamate receptor binding"/>
    <property type="evidence" value="ECO:0000353"/>
    <property type="project" value="RGD"/>
</dbReference>
<dbReference type="GO" id="GO:0019900">
    <property type="term" value="F:kinase binding"/>
    <property type="evidence" value="ECO:0000266"/>
    <property type="project" value="RGD"/>
</dbReference>
<dbReference type="GO" id="GO:0030165">
    <property type="term" value="F:PDZ domain binding"/>
    <property type="evidence" value="ECO:0000353"/>
    <property type="project" value="RGD"/>
</dbReference>
<dbReference type="GO" id="GO:0019902">
    <property type="term" value="F:phosphatase binding"/>
    <property type="evidence" value="ECO:0000250"/>
    <property type="project" value="UniProtKB"/>
</dbReference>
<dbReference type="GO" id="GO:0019904">
    <property type="term" value="F:protein domain specific binding"/>
    <property type="evidence" value="ECO:0000314"/>
    <property type="project" value="RGD"/>
</dbReference>
<dbReference type="GO" id="GO:0019901">
    <property type="term" value="F:protein kinase binding"/>
    <property type="evidence" value="ECO:0000318"/>
    <property type="project" value="GO_Central"/>
</dbReference>
<dbReference type="GO" id="GO:0019903">
    <property type="term" value="F:protein phosphatase binding"/>
    <property type="evidence" value="ECO:0000353"/>
    <property type="project" value="BHF-UCL"/>
</dbReference>
<dbReference type="GO" id="GO:0098919">
    <property type="term" value="F:structural constituent of postsynaptic density"/>
    <property type="evidence" value="ECO:0000314"/>
    <property type="project" value="SynGO"/>
</dbReference>
<dbReference type="GO" id="GO:0031625">
    <property type="term" value="F:ubiquitin protein ligase binding"/>
    <property type="evidence" value="ECO:0000266"/>
    <property type="project" value="RGD"/>
</dbReference>
<dbReference type="GO" id="GO:0098609">
    <property type="term" value="P:cell-cell adhesion"/>
    <property type="evidence" value="ECO:0000318"/>
    <property type="project" value="GO_Central"/>
</dbReference>
<dbReference type="GO" id="GO:0007268">
    <property type="term" value="P:chemical synaptic transmission"/>
    <property type="evidence" value="ECO:0000318"/>
    <property type="project" value="GO_Central"/>
</dbReference>
<dbReference type="GO" id="GO:0001736">
    <property type="term" value="P:establishment of planar polarity"/>
    <property type="evidence" value="ECO:0000266"/>
    <property type="project" value="RGD"/>
</dbReference>
<dbReference type="GO" id="GO:0045197">
    <property type="term" value="P:establishment or maintenance of epithelial cell apical/basal polarity"/>
    <property type="evidence" value="ECO:0000266"/>
    <property type="project" value="RGD"/>
</dbReference>
<dbReference type="GO" id="GO:0007399">
    <property type="term" value="P:nervous system development"/>
    <property type="evidence" value="ECO:0000318"/>
    <property type="project" value="GO_Central"/>
</dbReference>
<dbReference type="GO" id="GO:0035418">
    <property type="term" value="P:protein localization to synapse"/>
    <property type="evidence" value="ECO:0000318"/>
    <property type="project" value="GO_Central"/>
</dbReference>
<dbReference type="GO" id="GO:0043113">
    <property type="term" value="P:receptor clustering"/>
    <property type="evidence" value="ECO:0000318"/>
    <property type="project" value="GO_Central"/>
</dbReference>
<dbReference type="GO" id="GO:0097120">
    <property type="term" value="P:receptor localization to synapse"/>
    <property type="evidence" value="ECO:0000318"/>
    <property type="project" value="GO_Central"/>
</dbReference>
<dbReference type="GO" id="GO:0099072">
    <property type="term" value="P:regulation of postsynaptic membrane neurotransmitter receptor levels"/>
    <property type="evidence" value="ECO:0000266"/>
    <property type="project" value="RGD"/>
</dbReference>
<dbReference type="CDD" id="cd00071">
    <property type="entry name" value="GMPK"/>
    <property type="match status" value="1"/>
</dbReference>
<dbReference type="CDD" id="cd06723">
    <property type="entry name" value="PDZ1_Dlg1-2-4-like"/>
    <property type="match status" value="1"/>
</dbReference>
<dbReference type="CDD" id="cd06724">
    <property type="entry name" value="PDZ2_Dlg1-2-4-like"/>
    <property type="match status" value="1"/>
</dbReference>
<dbReference type="CDD" id="cd06795">
    <property type="entry name" value="PDZ3_Dlg1-2-4-like"/>
    <property type="match status" value="1"/>
</dbReference>
<dbReference type="CDD" id="cd12029">
    <property type="entry name" value="SH3_DLG3"/>
    <property type="match status" value="1"/>
</dbReference>
<dbReference type="FunFam" id="3.40.50.300:FF:001402">
    <property type="entry name" value="Discs, large homolog 3 (Drosophila)"/>
    <property type="match status" value="1"/>
</dbReference>
<dbReference type="FunFam" id="2.30.30.40:FF:000008">
    <property type="entry name" value="Disks large homolog 1 isoform 2"/>
    <property type="match status" value="1"/>
</dbReference>
<dbReference type="FunFam" id="2.30.42.10:FF:000001">
    <property type="entry name" value="Disks large homolog 1 isoform 2"/>
    <property type="match status" value="1"/>
</dbReference>
<dbReference type="FunFam" id="3.30.63.10:FF:000001">
    <property type="entry name" value="Disks large homolog 1 isoform 2"/>
    <property type="match status" value="1"/>
</dbReference>
<dbReference type="FunFam" id="2.30.42.10:FF:000091">
    <property type="entry name" value="disks large homolog 1 isoform X8"/>
    <property type="match status" value="1"/>
</dbReference>
<dbReference type="FunFam" id="2.30.30.40:FF:000027">
    <property type="entry name" value="Disks large homolog 3 isoform 1"/>
    <property type="match status" value="1"/>
</dbReference>
<dbReference type="FunFam" id="2.30.42.10:FF:000002">
    <property type="entry name" value="Disks large homolog 4 isoform 2"/>
    <property type="match status" value="1"/>
</dbReference>
<dbReference type="Gene3D" id="2.30.42.10">
    <property type="match status" value="3"/>
</dbReference>
<dbReference type="Gene3D" id="3.30.63.10">
    <property type="entry name" value="Guanylate Kinase phosphate binding domain"/>
    <property type="match status" value="1"/>
</dbReference>
<dbReference type="Gene3D" id="3.40.50.300">
    <property type="entry name" value="P-loop containing nucleotide triphosphate hydrolases"/>
    <property type="match status" value="1"/>
</dbReference>
<dbReference type="Gene3D" id="2.30.30.40">
    <property type="entry name" value="SH3 Domains"/>
    <property type="match status" value="2"/>
</dbReference>
<dbReference type="InterPro" id="IPR019583">
    <property type="entry name" value="DLG1-4_PDZ_assoc"/>
</dbReference>
<dbReference type="InterPro" id="IPR016313">
    <property type="entry name" value="DLG1-like"/>
</dbReference>
<dbReference type="InterPro" id="IPR019590">
    <property type="entry name" value="DLG1_PEST_dom"/>
</dbReference>
<dbReference type="InterPro" id="IPR035763">
    <property type="entry name" value="DLG3_SH3"/>
</dbReference>
<dbReference type="InterPro" id="IPR008145">
    <property type="entry name" value="GK/Ca_channel_bsu"/>
</dbReference>
<dbReference type="InterPro" id="IPR008144">
    <property type="entry name" value="Guanylate_kin-like_dom"/>
</dbReference>
<dbReference type="InterPro" id="IPR020590">
    <property type="entry name" value="Guanylate_kinase_CS"/>
</dbReference>
<dbReference type="InterPro" id="IPR027417">
    <property type="entry name" value="P-loop_NTPase"/>
</dbReference>
<dbReference type="InterPro" id="IPR001478">
    <property type="entry name" value="PDZ"/>
</dbReference>
<dbReference type="InterPro" id="IPR036034">
    <property type="entry name" value="PDZ_sf"/>
</dbReference>
<dbReference type="InterPro" id="IPR036028">
    <property type="entry name" value="SH3-like_dom_sf"/>
</dbReference>
<dbReference type="InterPro" id="IPR001452">
    <property type="entry name" value="SH3_domain"/>
</dbReference>
<dbReference type="InterPro" id="IPR050614">
    <property type="entry name" value="Synaptic_Scaffolding_LAP-MAGUK"/>
</dbReference>
<dbReference type="PANTHER" id="PTHR23119">
    <property type="entry name" value="DISCS LARGE"/>
    <property type="match status" value="1"/>
</dbReference>
<dbReference type="PANTHER" id="PTHR23119:SF28">
    <property type="entry name" value="DISKS LARGE HOMOLOG 3"/>
    <property type="match status" value="1"/>
</dbReference>
<dbReference type="Pfam" id="PF00625">
    <property type="entry name" value="Guanylate_kin"/>
    <property type="match status" value="1"/>
</dbReference>
<dbReference type="Pfam" id="PF10608">
    <property type="entry name" value="MAGUK_N_PEST"/>
    <property type="match status" value="1"/>
</dbReference>
<dbReference type="Pfam" id="PF00595">
    <property type="entry name" value="PDZ"/>
    <property type="match status" value="3"/>
</dbReference>
<dbReference type="Pfam" id="PF10600">
    <property type="entry name" value="PDZ_assoc"/>
    <property type="match status" value="1"/>
</dbReference>
<dbReference type="Pfam" id="PF00018">
    <property type="entry name" value="SH3_1"/>
    <property type="match status" value="1"/>
</dbReference>
<dbReference type="PIRSF" id="PIRSF001741">
    <property type="entry name" value="MAGUK_DLGH"/>
    <property type="match status" value="1"/>
</dbReference>
<dbReference type="SMART" id="SM00072">
    <property type="entry name" value="GuKc"/>
    <property type="match status" value="1"/>
</dbReference>
<dbReference type="SMART" id="SM01277">
    <property type="entry name" value="MAGUK_N_PEST"/>
    <property type="match status" value="1"/>
</dbReference>
<dbReference type="SMART" id="SM00228">
    <property type="entry name" value="PDZ"/>
    <property type="match status" value="3"/>
</dbReference>
<dbReference type="SMART" id="SM00326">
    <property type="entry name" value="SH3"/>
    <property type="match status" value="1"/>
</dbReference>
<dbReference type="SUPFAM" id="SSF52540">
    <property type="entry name" value="P-loop containing nucleoside triphosphate hydrolases"/>
    <property type="match status" value="1"/>
</dbReference>
<dbReference type="SUPFAM" id="SSF50156">
    <property type="entry name" value="PDZ domain-like"/>
    <property type="match status" value="3"/>
</dbReference>
<dbReference type="SUPFAM" id="SSF50044">
    <property type="entry name" value="SH3-domain"/>
    <property type="match status" value="1"/>
</dbReference>
<dbReference type="PROSITE" id="PS00856">
    <property type="entry name" value="GUANYLATE_KINASE_1"/>
    <property type="match status" value="1"/>
</dbReference>
<dbReference type="PROSITE" id="PS50052">
    <property type="entry name" value="GUANYLATE_KINASE_2"/>
    <property type="match status" value="1"/>
</dbReference>
<dbReference type="PROSITE" id="PS50106">
    <property type="entry name" value="PDZ"/>
    <property type="match status" value="3"/>
</dbReference>
<dbReference type="PROSITE" id="PS50002">
    <property type="entry name" value="SH3"/>
    <property type="match status" value="1"/>
</dbReference>
<feature type="chain" id="PRO_0000094559" description="Disks large homolog 3">
    <location>
        <begin position="1"/>
        <end position="849"/>
    </location>
</feature>
<feature type="domain" description="PDZ 1" evidence="5">
    <location>
        <begin position="149"/>
        <end position="235"/>
    </location>
</feature>
<feature type="domain" description="PDZ 2" evidence="5">
    <location>
        <begin position="244"/>
        <end position="330"/>
    </location>
</feature>
<feature type="domain" description="PDZ 3" evidence="5">
    <location>
        <begin position="404"/>
        <end position="484"/>
    </location>
</feature>
<feature type="domain" description="SH3" evidence="6">
    <location>
        <begin position="519"/>
        <end position="589"/>
    </location>
</feature>
<feature type="domain" description="Guanylate kinase-like" evidence="4">
    <location>
        <begin position="659"/>
        <end position="834"/>
    </location>
</feature>
<feature type="region of interest" description="Disordered" evidence="7">
    <location>
        <begin position="32"/>
        <end position="101"/>
    </location>
</feature>
<feature type="compositionally biased region" description="Gly residues" evidence="7">
    <location>
        <begin position="41"/>
        <end position="53"/>
    </location>
</feature>
<feature type="compositionally biased region" description="Polar residues" evidence="7">
    <location>
        <begin position="57"/>
        <end position="69"/>
    </location>
</feature>
<feature type="modified residue" description="Phosphoserine" evidence="2">
    <location>
        <position position="157"/>
    </location>
</feature>
<feature type="modified residue" description="Phosphotyrosine" evidence="2">
    <location>
        <position position="705"/>
    </location>
</feature>
<feature type="splice variant" id="VSP_003151" description="In isoform Short." evidence="9">
    <location>
        <begin position="627"/>
        <end position="640"/>
    </location>
</feature>
<feature type="strand" evidence="10">
    <location>
        <begin position="403"/>
        <end position="408"/>
    </location>
</feature>
<feature type="strand" evidence="10">
    <location>
        <begin position="413"/>
        <end position="420"/>
    </location>
</feature>
<feature type="strand" evidence="10">
    <location>
        <begin position="422"/>
        <end position="425"/>
    </location>
</feature>
<feature type="strand" evidence="10">
    <location>
        <begin position="427"/>
        <end position="432"/>
    </location>
</feature>
<feature type="helix" evidence="10">
    <location>
        <begin position="437"/>
        <end position="441"/>
    </location>
</feature>
<feature type="strand" evidence="10">
    <location>
        <begin position="448"/>
        <end position="453"/>
    </location>
</feature>
<feature type="helix" evidence="10">
    <location>
        <begin position="463"/>
        <end position="472"/>
    </location>
</feature>
<feature type="strand" evidence="10">
    <location>
        <begin position="476"/>
        <end position="483"/>
    </location>
</feature>
<feature type="helix" evidence="10">
    <location>
        <begin position="485"/>
        <end position="488"/>
    </location>
</feature>
<feature type="turn" evidence="10">
    <location>
        <begin position="489"/>
        <end position="491"/>
    </location>
</feature>
<evidence type="ECO:0000250" key="1"/>
<evidence type="ECO:0000250" key="2">
    <source>
        <dbReference type="UniProtKB" id="P70175"/>
    </source>
</evidence>
<evidence type="ECO:0000250" key="3">
    <source>
        <dbReference type="UniProtKB" id="Q92796"/>
    </source>
</evidence>
<evidence type="ECO:0000255" key="4">
    <source>
        <dbReference type="PROSITE-ProRule" id="PRU00100"/>
    </source>
</evidence>
<evidence type="ECO:0000255" key="5">
    <source>
        <dbReference type="PROSITE-ProRule" id="PRU00143"/>
    </source>
</evidence>
<evidence type="ECO:0000255" key="6">
    <source>
        <dbReference type="PROSITE-ProRule" id="PRU00192"/>
    </source>
</evidence>
<evidence type="ECO:0000256" key="7">
    <source>
        <dbReference type="SAM" id="MobiDB-lite"/>
    </source>
</evidence>
<evidence type="ECO:0000269" key="8">
    <source>
    </source>
</evidence>
<evidence type="ECO:0000305" key="9"/>
<evidence type="ECO:0007829" key="10">
    <source>
        <dbReference type="PDB" id="3JXT"/>
    </source>
</evidence>
<reference key="1">
    <citation type="journal article" date="1996" name="Neuron">
        <title>SAP102, a novel postsynaptic protein that interacts with NMDA receptor complexes in vivo.</title>
        <authorList>
            <person name="Mueller B.M."/>
            <person name="Kistner U."/>
            <person name="Kindler S."/>
            <person name="Chung W.J."/>
            <person name="Kuhlendahl S."/>
            <person name="Fenster S.D."/>
            <person name="Lau L.-F."/>
            <person name="Veh R.W."/>
            <person name="Huganir R.L."/>
            <person name="Gundelfinger E.D."/>
            <person name="Garner C.C."/>
        </authorList>
    </citation>
    <scope>NUCLEOTIDE SEQUENCE [MRNA] (ISOFORM LONG)</scope>
    <scope>INTERACTION WITH GRIN2B</scope>
    <source>
        <tissue>Brain</tissue>
    </source>
</reference>
<reference key="2">
    <citation type="journal article" date="1997" name="J. Biol. Chem.">
        <title>SAPAPs. A family of PSD-95/SAP90-associated proteins localized at postsynaptic density.</title>
        <authorList>
            <person name="Takeuchi M."/>
            <person name="Hata Y."/>
            <person name="Hirao K."/>
            <person name="Toyoda A."/>
            <person name="Irie M."/>
            <person name="Takai Y."/>
        </authorList>
    </citation>
    <scope>NUCLEOTIDE SEQUENCE [GENOMIC DNA] (ISOFORM SHORT)</scope>
    <scope>INTERACTION WITH DLGAP1; DLGAP2; DLGAP3 AND DLGAP4</scope>
    <source>
        <tissue>Brain</tissue>
    </source>
</reference>
<reference key="3">
    <citation type="journal article" date="1998" name="Neuron">
        <title>SynGAP: a synaptic RasGAP that associates with the PSD-95/SAP90 protein family.</title>
        <authorList>
            <person name="Kim J.H."/>
            <person name="Liao D."/>
            <person name="Lau L.-F."/>
            <person name="Huganir R.L."/>
        </authorList>
    </citation>
    <scope>INTERACTION WITH SYNGAP1</scope>
</reference>
<reference key="4">
    <citation type="journal article" date="2006" name="J. Neurosci.">
        <title>A novel family of adhesion-like molecules that interacts with the NMDA receptor.</title>
        <authorList>
            <person name="Wang C.Y."/>
            <person name="Chang K."/>
            <person name="Petralia R.S."/>
            <person name="Wang Y.X."/>
            <person name="Seabold G.K."/>
            <person name="Wenthold R.J."/>
        </authorList>
    </citation>
    <scope>INTERACTION WITH LRFN2</scope>
</reference>
<reference key="5">
    <citation type="journal article" date="2008" name="J. Neurosci.">
        <title>Preso, a novel PSD-95-interacting FERM and PDZ domain protein that regulates dendritic spine morphogenesis.</title>
        <authorList>
            <person name="Lee H.W."/>
            <person name="Choi J."/>
            <person name="Shin H."/>
            <person name="Kim K."/>
            <person name="Yang J."/>
            <person name="Na M."/>
            <person name="Choi S.Y."/>
            <person name="Kang G.B."/>
            <person name="Eom S.H."/>
            <person name="Kim H."/>
            <person name="Kim E."/>
        </authorList>
    </citation>
    <scope>INTERACTION WITH FRMPD4</scope>
</reference>
<reference key="6">
    <citation type="journal article" date="2011" name="EMBO J.">
        <title>DGKiota regulates presynaptic release during mGluR-dependent LTD.</title>
        <authorList>
            <person name="Yang J."/>
            <person name="Seo J."/>
            <person name="Nair R."/>
            <person name="Han S."/>
            <person name="Jang S."/>
            <person name="Kim K."/>
            <person name="Han K."/>
            <person name="Paik S.K."/>
            <person name="Choi J."/>
            <person name="Lee S."/>
            <person name="Bae Y.C."/>
            <person name="Topham M.K."/>
            <person name="Prescott S.M."/>
            <person name="Rhee J.S."/>
            <person name="Choi S.Y."/>
            <person name="Kim E."/>
        </authorList>
    </citation>
    <scope>INTERACTION WITH DGKI</scope>
</reference>
<proteinExistence type="evidence at protein level"/>
<comment type="function">
    <text evidence="1">Required for learning most likely through its role in synaptic plasticity following NMDA receptor signaling.</text>
</comment>
<comment type="subunit">
    <text evidence="2 3 8">Interacts through its PDZ domains with NETO1 and APC. Interacts through its first two PDZ domains with ERBB4. Interacts through its third PDZ domain with NLGN1, and probably with NLGN2 and NLGN3 (By similarity). Interacts through its PDZ domains with GRIN2B and SYNGAP1. Interacts through its guanylate kinase-like domain with DLGAP1, DLGAP2, DLGAP3 and DLGAP4. Interacts with FRMPD4 (via C-terminus). Interacts with LRFN2. Interacts with LRFN1 and LRFN4. Interacts with FLTP (By similarity). Interacts with DGKI (via PDZ-binding motif) (PubMed:21119615).</text>
</comment>
<comment type="interaction">
    <interactant intactId="EBI-349596">
        <id>Q62936</id>
    </interactant>
    <interactant intactId="EBI-8570505">
        <id>O08560</id>
        <label>Dgkz</label>
    </interactant>
    <organismsDiffer>false</organismsDiffer>
    <experiments>4</experiments>
</comment>
<comment type="interaction">
    <interactant intactId="EBI-349596">
        <id>Q62936</id>
    </interactant>
    <interactant intactId="EBI-396905">
        <id>Q00960</id>
        <label>Grin2b</label>
    </interactant>
    <organismsDiffer>false</organismsDiffer>
    <experiments>6</experiments>
</comment>
<comment type="interaction">
    <interactant intactId="EBI-349596">
        <id>Q62936</id>
    </interactant>
    <interactant intactId="EBI-877185">
        <id>Q460M5</id>
        <label>Lrfn2</label>
    </interactant>
    <organismsDiffer>false</organismsDiffer>
    <experiments>2</experiments>
</comment>
<comment type="interaction">
    <interactant intactId="EBI-349596">
        <id>Q62936</id>
    </interactant>
    <interactant intactId="EBI-1174437">
        <id>P23634-6</id>
        <label>ATP2B4</label>
    </interactant>
    <organismsDiffer>true</organismsDiffer>
    <experiments>2</experiments>
</comment>
<comment type="interaction">
    <interactant intactId="EBI-349596">
        <id>Q62936</id>
    </interactant>
    <interactant intactId="EBI-946968">
        <id>Q9P021</id>
        <label>CRIPT</label>
    </interactant>
    <organismsDiffer>true</organismsDiffer>
    <experiments>5</experiments>
</comment>
<comment type="interaction">
    <interactant intactId="EBI-349596">
        <id>Q62936</id>
    </interactant>
    <interactant intactId="EBI-8286218">
        <id>Q05586-2</id>
        <label>GRIN1</label>
    </interactant>
    <organismsDiffer>true</organismsDiffer>
    <experiments>3</experiments>
</comment>
<comment type="interaction">
    <interactant intactId="EBI-349596">
        <id>Q62936</id>
    </interactant>
    <interactant intactId="EBI-7249937">
        <id>Q12879</id>
        <label>GRIN2A</label>
    </interactant>
    <organismsDiffer>true</organismsDiffer>
    <experiments>5</experiments>
</comment>
<comment type="interaction">
    <interactant intactId="EBI-349596">
        <id>Q62936</id>
    </interactant>
    <interactant intactId="EBI-2256942">
        <id>Q13224</id>
        <label>GRIN2B</label>
    </interactant>
    <organismsDiffer>true</organismsDiffer>
    <experiments>4</experiments>
</comment>
<comment type="interaction">
    <interactant intactId="EBI-349596">
        <id>Q62936</id>
    </interactant>
    <interactant intactId="EBI-8285963">
        <id>Q14957</id>
        <label>GRIN2C</label>
    </interactant>
    <organismsDiffer>true</organismsDiffer>
    <experiments>6</experiments>
</comment>
<comment type="interaction">
    <interactant intactId="EBI-349596">
        <id>Q62936</id>
    </interactant>
    <interactant intactId="EBI-1754030">
        <id>O15399</id>
        <label>GRIN2D</label>
    </interactant>
    <organismsDiffer>true</organismsDiffer>
    <experiments>2</experiments>
</comment>
<comment type="interaction">
    <interactant intactId="EBI-349596">
        <id>Q62936</id>
    </interactant>
    <interactant intactId="EBI-8286599">
        <id>Q09470</id>
        <label>KCNA1</label>
    </interactant>
    <organismsDiffer>true</organismsDiffer>
    <experiments>2</experiments>
</comment>
<comment type="interaction">
    <interactant intactId="EBI-349596">
        <id>Q62936</id>
    </interactant>
    <interactant intactId="EBI-631235">
        <id>P22459</id>
        <label>KCNA4</label>
    </interactant>
    <organismsDiffer>true</organismsDiffer>
    <experiments>4</experiments>
</comment>
<comment type="alternative products">
    <event type="alternative splicing"/>
    <isoform>
        <id>Q62936-1</id>
        <name>Long</name>
        <sequence type="displayed"/>
    </isoform>
    <isoform>
        <id>Q62936-2</id>
        <name>Short</name>
        <sequence type="described" ref="VSP_003151"/>
    </isoform>
</comment>
<comment type="similarity">
    <text evidence="9">Belongs to the MAGUK family.</text>
</comment>